<name>RUVA_NEIMF</name>
<sequence>MISRLTGKLVEKNPPQIVIDVNGVGYEADVSMQTFYNLPPVGESVQLFTQLIIREDAHLLFGFATAEERKTFRQLIKVSGIGAKTALGILSAMTADELAQAVAEEDVKRLSSAPGIGKKTAERMVLELRGKLVAHAVTDGLFAAAPAADETEDIVGTLLALGYSEREAKAAVKGVPKGTDVGEGVRLALKNLLK</sequence>
<organism>
    <name type="scientific">Neisseria meningitidis serogroup C / serotype 2a (strain ATCC 700532 / DSM 15464 / FAM18)</name>
    <dbReference type="NCBI Taxonomy" id="272831"/>
    <lineage>
        <taxon>Bacteria</taxon>
        <taxon>Pseudomonadati</taxon>
        <taxon>Pseudomonadota</taxon>
        <taxon>Betaproteobacteria</taxon>
        <taxon>Neisseriales</taxon>
        <taxon>Neisseriaceae</taxon>
        <taxon>Neisseria</taxon>
    </lineage>
</organism>
<reference key="1">
    <citation type="journal article" date="2007" name="PLoS Genet.">
        <title>Meningococcal genetic variation mechanisms viewed through comparative analysis of serogroup C strain FAM18.</title>
        <authorList>
            <person name="Bentley S.D."/>
            <person name="Vernikos G.S."/>
            <person name="Snyder L.A.S."/>
            <person name="Churcher C."/>
            <person name="Arrowsmith C."/>
            <person name="Chillingworth T."/>
            <person name="Cronin A."/>
            <person name="Davis P.H."/>
            <person name="Holroyd N.E."/>
            <person name="Jagels K."/>
            <person name="Maddison M."/>
            <person name="Moule S."/>
            <person name="Rabbinowitsch E."/>
            <person name="Sharp S."/>
            <person name="Unwin L."/>
            <person name="Whitehead S."/>
            <person name="Quail M.A."/>
            <person name="Achtman M."/>
            <person name="Barrell B.G."/>
            <person name="Saunders N.J."/>
            <person name="Parkhill J."/>
        </authorList>
    </citation>
    <scope>NUCLEOTIDE SEQUENCE [LARGE SCALE GENOMIC DNA]</scope>
    <source>
        <strain>ATCC 700532 / DSM 15464 / FAM18</strain>
    </source>
</reference>
<protein>
    <recommendedName>
        <fullName evidence="1">Holliday junction branch migration complex subunit RuvA</fullName>
    </recommendedName>
</protein>
<proteinExistence type="inferred from homology"/>
<feature type="chain" id="PRO_1000002497" description="Holliday junction branch migration complex subunit RuvA">
    <location>
        <begin position="1"/>
        <end position="194"/>
    </location>
</feature>
<feature type="region of interest" description="Domain I" evidence="1">
    <location>
        <begin position="1"/>
        <end position="64"/>
    </location>
</feature>
<feature type="region of interest" description="Domain II" evidence="1">
    <location>
        <begin position="65"/>
        <end position="143"/>
    </location>
</feature>
<feature type="region of interest" description="Flexible linker" evidence="1">
    <location>
        <begin position="144"/>
        <end position="147"/>
    </location>
</feature>
<feature type="region of interest" description="Domain III" evidence="1">
    <location>
        <begin position="147"/>
        <end position="194"/>
    </location>
</feature>
<dbReference type="EMBL" id="AM421808">
    <property type="protein sequence ID" value="CAM09573.1"/>
    <property type="molecule type" value="Genomic_DNA"/>
</dbReference>
<dbReference type="RefSeq" id="WP_002234505.1">
    <property type="nucleotide sequence ID" value="NC_008767.1"/>
</dbReference>
<dbReference type="SMR" id="A1KRU4"/>
<dbReference type="KEGG" id="nmc:NMC0259"/>
<dbReference type="HOGENOM" id="CLU_087936_0_0_4"/>
<dbReference type="Proteomes" id="UP000002286">
    <property type="component" value="Chromosome"/>
</dbReference>
<dbReference type="GO" id="GO:0005737">
    <property type="term" value="C:cytoplasm"/>
    <property type="evidence" value="ECO:0007669"/>
    <property type="project" value="UniProtKB-SubCell"/>
</dbReference>
<dbReference type="GO" id="GO:0009379">
    <property type="term" value="C:Holliday junction helicase complex"/>
    <property type="evidence" value="ECO:0007669"/>
    <property type="project" value="InterPro"/>
</dbReference>
<dbReference type="GO" id="GO:0048476">
    <property type="term" value="C:Holliday junction resolvase complex"/>
    <property type="evidence" value="ECO:0007669"/>
    <property type="project" value="UniProtKB-UniRule"/>
</dbReference>
<dbReference type="GO" id="GO:0005524">
    <property type="term" value="F:ATP binding"/>
    <property type="evidence" value="ECO:0007669"/>
    <property type="project" value="InterPro"/>
</dbReference>
<dbReference type="GO" id="GO:0000400">
    <property type="term" value="F:four-way junction DNA binding"/>
    <property type="evidence" value="ECO:0007669"/>
    <property type="project" value="UniProtKB-UniRule"/>
</dbReference>
<dbReference type="GO" id="GO:0009378">
    <property type="term" value="F:four-way junction helicase activity"/>
    <property type="evidence" value="ECO:0007669"/>
    <property type="project" value="InterPro"/>
</dbReference>
<dbReference type="GO" id="GO:0006310">
    <property type="term" value="P:DNA recombination"/>
    <property type="evidence" value="ECO:0007669"/>
    <property type="project" value="UniProtKB-UniRule"/>
</dbReference>
<dbReference type="GO" id="GO:0006281">
    <property type="term" value="P:DNA repair"/>
    <property type="evidence" value="ECO:0007669"/>
    <property type="project" value="UniProtKB-UniRule"/>
</dbReference>
<dbReference type="CDD" id="cd14332">
    <property type="entry name" value="UBA_RuvA_C"/>
    <property type="match status" value="1"/>
</dbReference>
<dbReference type="Gene3D" id="1.10.150.20">
    <property type="entry name" value="5' to 3' exonuclease, C-terminal subdomain"/>
    <property type="match status" value="1"/>
</dbReference>
<dbReference type="Gene3D" id="1.10.8.10">
    <property type="entry name" value="DNA helicase RuvA subunit, C-terminal domain"/>
    <property type="match status" value="1"/>
</dbReference>
<dbReference type="Gene3D" id="2.40.50.140">
    <property type="entry name" value="Nucleic acid-binding proteins"/>
    <property type="match status" value="1"/>
</dbReference>
<dbReference type="HAMAP" id="MF_00031">
    <property type="entry name" value="DNA_HJ_migration_RuvA"/>
    <property type="match status" value="1"/>
</dbReference>
<dbReference type="InterPro" id="IPR013849">
    <property type="entry name" value="DNA_helicase_Holl-junc_RuvA_I"/>
</dbReference>
<dbReference type="InterPro" id="IPR003583">
    <property type="entry name" value="Hlx-hairpin-Hlx_DNA-bd_motif"/>
</dbReference>
<dbReference type="InterPro" id="IPR012340">
    <property type="entry name" value="NA-bd_OB-fold"/>
</dbReference>
<dbReference type="InterPro" id="IPR000085">
    <property type="entry name" value="RuvA"/>
</dbReference>
<dbReference type="InterPro" id="IPR010994">
    <property type="entry name" value="RuvA_2-like"/>
</dbReference>
<dbReference type="InterPro" id="IPR011114">
    <property type="entry name" value="RuvA_C"/>
</dbReference>
<dbReference type="InterPro" id="IPR036267">
    <property type="entry name" value="RuvA_C_sf"/>
</dbReference>
<dbReference type="NCBIfam" id="TIGR00084">
    <property type="entry name" value="ruvA"/>
    <property type="match status" value="1"/>
</dbReference>
<dbReference type="Pfam" id="PF14520">
    <property type="entry name" value="HHH_5"/>
    <property type="match status" value="1"/>
</dbReference>
<dbReference type="Pfam" id="PF07499">
    <property type="entry name" value="RuvA_C"/>
    <property type="match status" value="1"/>
</dbReference>
<dbReference type="Pfam" id="PF01330">
    <property type="entry name" value="RuvA_N"/>
    <property type="match status" value="1"/>
</dbReference>
<dbReference type="SMART" id="SM00278">
    <property type="entry name" value="HhH1"/>
    <property type="match status" value="2"/>
</dbReference>
<dbReference type="SUPFAM" id="SSF46929">
    <property type="entry name" value="DNA helicase RuvA subunit, C-terminal domain"/>
    <property type="match status" value="1"/>
</dbReference>
<dbReference type="SUPFAM" id="SSF50249">
    <property type="entry name" value="Nucleic acid-binding proteins"/>
    <property type="match status" value="1"/>
</dbReference>
<dbReference type="SUPFAM" id="SSF47781">
    <property type="entry name" value="RuvA domain 2-like"/>
    <property type="match status" value="1"/>
</dbReference>
<evidence type="ECO:0000255" key="1">
    <source>
        <dbReference type="HAMAP-Rule" id="MF_00031"/>
    </source>
</evidence>
<comment type="function">
    <text evidence="1">The RuvA-RuvB-RuvC complex processes Holliday junction (HJ) DNA during genetic recombination and DNA repair, while the RuvA-RuvB complex plays an important role in the rescue of blocked DNA replication forks via replication fork reversal (RFR). RuvA specifically binds to HJ cruciform DNA, conferring on it an open structure. The RuvB hexamer acts as an ATP-dependent pump, pulling dsDNA into and through the RuvAB complex. HJ branch migration allows RuvC to scan DNA until it finds its consensus sequence, where it cleaves and resolves the cruciform DNA.</text>
</comment>
<comment type="subunit">
    <text evidence="1">Homotetramer. Forms an RuvA(8)-RuvB(12)-Holliday junction (HJ) complex. HJ DNA is sandwiched between 2 RuvA tetramers; dsDNA enters through RuvA and exits via RuvB. An RuvB hexamer assembles on each DNA strand where it exits the tetramer. Each RuvB hexamer is contacted by two RuvA subunits (via domain III) on 2 adjacent RuvB subunits; this complex drives branch migration. In the full resolvosome a probable DNA-RuvA(4)-RuvB(12)-RuvC(2) complex forms which resolves the HJ.</text>
</comment>
<comment type="subcellular location">
    <subcellularLocation>
        <location evidence="1">Cytoplasm</location>
    </subcellularLocation>
</comment>
<comment type="domain">
    <text evidence="1">Has three domains with a flexible linker between the domains II and III and assumes an 'L' shape. Domain III is highly mobile and contacts RuvB.</text>
</comment>
<comment type="similarity">
    <text evidence="1">Belongs to the RuvA family.</text>
</comment>
<keyword id="KW-0963">Cytoplasm</keyword>
<keyword id="KW-0227">DNA damage</keyword>
<keyword id="KW-0233">DNA recombination</keyword>
<keyword id="KW-0234">DNA repair</keyword>
<keyword id="KW-0238">DNA-binding</keyword>
<gene>
    <name evidence="1" type="primary">ruvA</name>
    <name type="ordered locus">NMC0259</name>
</gene>
<accession>A1KRU4</accession>